<feature type="chain" id="PRO_1000195665" description="Large ribosomal subunit protein uL11">
    <location>
        <begin position="1"/>
        <end position="141"/>
    </location>
</feature>
<comment type="function">
    <text evidence="1">Forms part of the ribosomal stalk which helps the ribosome interact with GTP-bound translation factors.</text>
</comment>
<comment type="subunit">
    <text evidence="1">Part of the ribosomal stalk of the 50S ribosomal subunit. Interacts with L10 and the large rRNA to form the base of the stalk. L10 forms an elongated spine to which L12 dimers bind in a sequential fashion forming a multimeric L10(L12)X complex.</text>
</comment>
<comment type="PTM">
    <text evidence="1">One or more lysine residues are methylated.</text>
</comment>
<comment type="similarity">
    <text evidence="1">Belongs to the universal ribosomal protein uL11 family.</text>
</comment>
<dbReference type="EMBL" id="CP000975">
    <property type="protein sequence ID" value="ACD82855.1"/>
    <property type="molecule type" value="Genomic_DNA"/>
</dbReference>
<dbReference type="RefSeq" id="WP_012463137.1">
    <property type="nucleotide sequence ID" value="NC_010794.1"/>
</dbReference>
<dbReference type="SMR" id="B3E159"/>
<dbReference type="STRING" id="481448.Minf_0800"/>
<dbReference type="KEGG" id="min:Minf_0800"/>
<dbReference type="eggNOG" id="COG0080">
    <property type="taxonomic scope" value="Bacteria"/>
</dbReference>
<dbReference type="HOGENOM" id="CLU_074237_2_1_0"/>
<dbReference type="OrthoDB" id="9802408at2"/>
<dbReference type="Proteomes" id="UP000009149">
    <property type="component" value="Chromosome"/>
</dbReference>
<dbReference type="GO" id="GO:0022625">
    <property type="term" value="C:cytosolic large ribosomal subunit"/>
    <property type="evidence" value="ECO:0007669"/>
    <property type="project" value="TreeGrafter"/>
</dbReference>
<dbReference type="GO" id="GO:0070180">
    <property type="term" value="F:large ribosomal subunit rRNA binding"/>
    <property type="evidence" value="ECO:0007669"/>
    <property type="project" value="UniProtKB-UniRule"/>
</dbReference>
<dbReference type="GO" id="GO:0003735">
    <property type="term" value="F:structural constituent of ribosome"/>
    <property type="evidence" value="ECO:0007669"/>
    <property type="project" value="InterPro"/>
</dbReference>
<dbReference type="GO" id="GO:0006412">
    <property type="term" value="P:translation"/>
    <property type="evidence" value="ECO:0007669"/>
    <property type="project" value="UniProtKB-UniRule"/>
</dbReference>
<dbReference type="CDD" id="cd00349">
    <property type="entry name" value="Ribosomal_L11"/>
    <property type="match status" value="1"/>
</dbReference>
<dbReference type="FunFam" id="1.10.10.250:FF:000001">
    <property type="entry name" value="50S ribosomal protein L11"/>
    <property type="match status" value="1"/>
</dbReference>
<dbReference type="FunFam" id="3.30.1550.10:FF:000001">
    <property type="entry name" value="50S ribosomal protein L11"/>
    <property type="match status" value="1"/>
</dbReference>
<dbReference type="Gene3D" id="1.10.10.250">
    <property type="entry name" value="Ribosomal protein L11, C-terminal domain"/>
    <property type="match status" value="1"/>
</dbReference>
<dbReference type="Gene3D" id="3.30.1550.10">
    <property type="entry name" value="Ribosomal protein L11/L12, N-terminal domain"/>
    <property type="match status" value="1"/>
</dbReference>
<dbReference type="HAMAP" id="MF_00736">
    <property type="entry name" value="Ribosomal_uL11"/>
    <property type="match status" value="1"/>
</dbReference>
<dbReference type="InterPro" id="IPR000911">
    <property type="entry name" value="Ribosomal_uL11"/>
</dbReference>
<dbReference type="InterPro" id="IPR006519">
    <property type="entry name" value="Ribosomal_uL11_bac-typ"/>
</dbReference>
<dbReference type="InterPro" id="IPR020783">
    <property type="entry name" value="Ribosomal_uL11_C"/>
</dbReference>
<dbReference type="InterPro" id="IPR036769">
    <property type="entry name" value="Ribosomal_uL11_C_sf"/>
</dbReference>
<dbReference type="InterPro" id="IPR020785">
    <property type="entry name" value="Ribosomal_uL11_CS"/>
</dbReference>
<dbReference type="InterPro" id="IPR020784">
    <property type="entry name" value="Ribosomal_uL11_N"/>
</dbReference>
<dbReference type="InterPro" id="IPR036796">
    <property type="entry name" value="Ribosomal_uL11_N_sf"/>
</dbReference>
<dbReference type="NCBIfam" id="TIGR01632">
    <property type="entry name" value="L11_bact"/>
    <property type="match status" value="1"/>
</dbReference>
<dbReference type="PANTHER" id="PTHR11661">
    <property type="entry name" value="60S RIBOSOMAL PROTEIN L12"/>
    <property type="match status" value="1"/>
</dbReference>
<dbReference type="PANTHER" id="PTHR11661:SF1">
    <property type="entry name" value="LARGE RIBOSOMAL SUBUNIT PROTEIN UL11M"/>
    <property type="match status" value="1"/>
</dbReference>
<dbReference type="Pfam" id="PF00298">
    <property type="entry name" value="Ribosomal_L11"/>
    <property type="match status" value="1"/>
</dbReference>
<dbReference type="Pfam" id="PF03946">
    <property type="entry name" value="Ribosomal_L11_N"/>
    <property type="match status" value="1"/>
</dbReference>
<dbReference type="SMART" id="SM00649">
    <property type="entry name" value="RL11"/>
    <property type="match status" value="1"/>
</dbReference>
<dbReference type="SUPFAM" id="SSF54747">
    <property type="entry name" value="Ribosomal L11/L12e N-terminal domain"/>
    <property type="match status" value="1"/>
</dbReference>
<dbReference type="SUPFAM" id="SSF46906">
    <property type="entry name" value="Ribosomal protein L11, C-terminal domain"/>
    <property type="match status" value="1"/>
</dbReference>
<dbReference type="PROSITE" id="PS00359">
    <property type="entry name" value="RIBOSOMAL_L11"/>
    <property type="match status" value="1"/>
</dbReference>
<organism>
    <name type="scientific">Methylacidiphilum infernorum (isolate V4)</name>
    <name type="common">Methylokorus infernorum (strain V4)</name>
    <dbReference type="NCBI Taxonomy" id="481448"/>
    <lineage>
        <taxon>Bacteria</taxon>
        <taxon>Pseudomonadati</taxon>
        <taxon>Verrucomicrobiota</taxon>
        <taxon>Methylacidiphilae</taxon>
        <taxon>Methylacidiphilales</taxon>
        <taxon>Methylacidiphilaceae</taxon>
        <taxon>Methylacidiphilum (ex Ratnadevi et al. 2023)</taxon>
    </lineage>
</organism>
<protein>
    <recommendedName>
        <fullName evidence="1">Large ribosomal subunit protein uL11</fullName>
    </recommendedName>
    <alternativeName>
        <fullName evidence="2">50S ribosomal protein L11</fullName>
    </alternativeName>
</protein>
<proteinExistence type="inferred from homology"/>
<name>RL11_METI4</name>
<sequence length="141" mass="15099">MAKEVSAIVRLQIPAGQANPAPPVGPALGQHGVNIMAFCKEFNAATQKEAGNILPVVITIYKDKTFTFVTKSPPASILLKKAANIASGSKEPNRTKVGKVTKAQVKEIVKIKWKDLNASTEEAAMRMIEGTARNMGIEVVE</sequence>
<keyword id="KW-0488">Methylation</keyword>
<keyword id="KW-0687">Ribonucleoprotein</keyword>
<keyword id="KW-0689">Ribosomal protein</keyword>
<keyword id="KW-0694">RNA-binding</keyword>
<keyword id="KW-0699">rRNA-binding</keyword>
<accession>B3E159</accession>
<reference key="1">
    <citation type="journal article" date="2008" name="Biol. Direct">
        <title>Complete genome sequence of the extremely acidophilic methanotroph isolate V4, Methylacidiphilum infernorum, a representative of the bacterial phylum Verrucomicrobia.</title>
        <authorList>
            <person name="Hou S."/>
            <person name="Makarova K.S."/>
            <person name="Saw J.H."/>
            <person name="Senin P."/>
            <person name="Ly B.V."/>
            <person name="Zhou Z."/>
            <person name="Ren Y."/>
            <person name="Wang J."/>
            <person name="Galperin M.Y."/>
            <person name="Omelchenko M.V."/>
            <person name="Wolf Y.I."/>
            <person name="Yutin N."/>
            <person name="Koonin E.V."/>
            <person name="Stott M.B."/>
            <person name="Mountain B.W."/>
            <person name="Crowe M.A."/>
            <person name="Smirnova A.V."/>
            <person name="Dunfield P.F."/>
            <person name="Feng L."/>
            <person name="Wang L."/>
            <person name="Alam M."/>
        </authorList>
    </citation>
    <scope>NUCLEOTIDE SEQUENCE [LARGE SCALE GENOMIC DNA]</scope>
    <source>
        <strain>Isolate V4</strain>
    </source>
</reference>
<gene>
    <name evidence="1" type="primary">rplK</name>
    <name type="ordered locus">Minf_0800</name>
</gene>
<evidence type="ECO:0000255" key="1">
    <source>
        <dbReference type="HAMAP-Rule" id="MF_00736"/>
    </source>
</evidence>
<evidence type="ECO:0000305" key="2"/>